<name>LOLA_LEPCP</name>
<dbReference type="EMBL" id="CP001013">
    <property type="protein sequence ID" value="ACB33030.1"/>
    <property type="molecule type" value="Genomic_DNA"/>
</dbReference>
<dbReference type="RefSeq" id="WP_012345792.1">
    <property type="nucleotide sequence ID" value="NC_010524.1"/>
</dbReference>
<dbReference type="SMR" id="B1Y153"/>
<dbReference type="STRING" id="395495.Lcho_0757"/>
<dbReference type="KEGG" id="lch:Lcho_0757"/>
<dbReference type="eggNOG" id="COG2834">
    <property type="taxonomic scope" value="Bacteria"/>
</dbReference>
<dbReference type="HOGENOM" id="CLU_087560_0_0_4"/>
<dbReference type="OrthoDB" id="9787361at2"/>
<dbReference type="Proteomes" id="UP000001693">
    <property type="component" value="Chromosome"/>
</dbReference>
<dbReference type="GO" id="GO:0042597">
    <property type="term" value="C:periplasmic space"/>
    <property type="evidence" value="ECO:0007669"/>
    <property type="project" value="UniProtKB-SubCell"/>
</dbReference>
<dbReference type="GO" id="GO:0044874">
    <property type="term" value="P:lipoprotein localization to outer membrane"/>
    <property type="evidence" value="ECO:0007669"/>
    <property type="project" value="UniProtKB-UniRule"/>
</dbReference>
<dbReference type="GO" id="GO:0042953">
    <property type="term" value="P:lipoprotein transport"/>
    <property type="evidence" value="ECO:0007669"/>
    <property type="project" value="InterPro"/>
</dbReference>
<dbReference type="CDD" id="cd16325">
    <property type="entry name" value="LolA"/>
    <property type="match status" value="1"/>
</dbReference>
<dbReference type="Gene3D" id="2.50.20.10">
    <property type="entry name" value="Lipoprotein localisation LolA/LolB/LppX"/>
    <property type="match status" value="1"/>
</dbReference>
<dbReference type="HAMAP" id="MF_00240">
    <property type="entry name" value="LolA"/>
    <property type="match status" value="1"/>
</dbReference>
<dbReference type="InterPro" id="IPR029046">
    <property type="entry name" value="LolA/LolB/LppX"/>
</dbReference>
<dbReference type="InterPro" id="IPR004564">
    <property type="entry name" value="OM_lipoprot_carrier_LolA-like"/>
</dbReference>
<dbReference type="InterPro" id="IPR018323">
    <property type="entry name" value="OM_lipoprot_carrier_LolA_Pbac"/>
</dbReference>
<dbReference type="NCBIfam" id="TIGR00547">
    <property type="entry name" value="lolA"/>
    <property type="match status" value="1"/>
</dbReference>
<dbReference type="PANTHER" id="PTHR35869">
    <property type="entry name" value="OUTER-MEMBRANE LIPOPROTEIN CARRIER PROTEIN"/>
    <property type="match status" value="1"/>
</dbReference>
<dbReference type="PANTHER" id="PTHR35869:SF1">
    <property type="entry name" value="OUTER-MEMBRANE LIPOPROTEIN CARRIER PROTEIN"/>
    <property type="match status" value="1"/>
</dbReference>
<dbReference type="Pfam" id="PF03548">
    <property type="entry name" value="LolA"/>
    <property type="match status" value="1"/>
</dbReference>
<dbReference type="SUPFAM" id="SSF89392">
    <property type="entry name" value="Prokaryotic lipoproteins and lipoprotein localization factors"/>
    <property type="match status" value="1"/>
</dbReference>
<gene>
    <name evidence="1" type="primary">lolA</name>
    <name type="ordered locus">Lcho_0757</name>
</gene>
<keyword id="KW-0143">Chaperone</keyword>
<keyword id="KW-0574">Periplasm</keyword>
<keyword id="KW-0653">Protein transport</keyword>
<keyword id="KW-1185">Reference proteome</keyword>
<keyword id="KW-0732">Signal</keyword>
<keyword id="KW-0813">Transport</keyword>
<proteinExistence type="inferred from homology"/>
<feature type="signal peptide" evidence="1">
    <location>
        <begin position="1"/>
        <end position="29"/>
    </location>
</feature>
<feature type="chain" id="PRO_5000331484" description="Outer-membrane lipoprotein carrier protein">
    <location>
        <begin position="30"/>
        <end position="212"/>
    </location>
</feature>
<organism>
    <name type="scientific">Leptothrix cholodnii (strain ATCC 51168 / LMG 8142 / SP-6)</name>
    <name type="common">Leptothrix discophora (strain SP-6)</name>
    <dbReference type="NCBI Taxonomy" id="395495"/>
    <lineage>
        <taxon>Bacteria</taxon>
        <taxon>Pseudomonadati</taxon>
        <taxon>Pseudomonadota</taxon>
        <taxon>Betaproteobacteria</taxon>
        <taxon>Burkholderiales</taxon>
        <taxon>Sphaerotilaceae</taxon>
        <taxon>Leptothrix</taxon>
    </lineage>
</organism>
<protein>
    <recommendedName>
        <fullName evidence="1">Outer-membrane lipoprotein carrier protein</fullName>
    </recommendedName>
</protein>
<evidence type="ECO:0000255" key="1">
    <source>
        <dbReference type="HAMAP-Rule" id="MF_00240"/>
    </source>
</evidence>
<sequence>MSSARRRALGFSFQALLLCAAGWHGAAQADGVSALRDFVQNVQSGRATFNQTVTSPDGAKKKTSTGSFEFLRPNRFRFDYTKPYEQQIVADGVKVWLHDVDLNQVTVRPFDQALGSTPAALLAGASIERDFTLANLPEEAGLQWVQALPKAREGSIRSLRVAFRGKDLAAFEITDAFGQRSRLDFNRFEGNAAVPAARFKFVAPAGADVLQQ</sequence>
<comment type="function">
    <text evidence="1">Participates in the translocation of lipoproteins from the inner membrane to the outer membrane. Only forms a complex with a lipoprotein if the residue after the N-terminal Cys is not an aspartate (The Asp acts as a targeting signal to indicate that the lipoprotein should stay in the inner membrane).</text>
</comment>
<comment type="subunit">
    <text evidence="1">Monomer.</text>
</comment>
<comment type="subcellular location">
    <subcellularLocation>
        <location evidence="1">Periplasm</location>
    </subcellularLocation>
</comment>
<comment type="similarity">
    <text evidence="1">Belongs to the LolA family.</text>
</comment>
<reference key="1">
    <citation type="submission" date="2008-03" db="EMBL/GenBank/DDBJ databases">
        <title>Complete sequence of Leptothrix cholodnii SP-6.</title>
        <authorList>
            <consortium name="US DOE Joint Genome Institute"/>
            <person name="Copeland A."/>
            <person name="Lucas S."/>
            <person name="Lapidus A."/>
            <person name="Glavina del Rio T."/>
            <person name="Dalin E."/>
            <person name="Tice H."/>
            <person name="Bruce D."/>
            <person name="Goodwin L."/>
            <person name="Pitluck S."/>
            <person name="Chertkov O."/>
            <person name="Brettin T."/>
            <person name="Detter J.C."/>
            <person name="Han C."/>
            <person name="Kuske C.R."/>
            <person name="Schmutz J."/>
            <person name="Larimer F."/>
            <person name="Land M."/>
            <person name="Hauser L."/>
            <person name="Kyrpides N."/>
            <person name="Lykidis A."/>
            <person name="Emerson D."/>
            <person name="Richardson P."/>
        </authorList>
    </citation>
    <scope>NUCLEOTIDE SEQUENCE [LARGE SCALE GENOMIC DNA]</scope>
    <source>
        <strain>ATCC 51168 / LMG 8142 / SP-6</strain>
    </source>
</reference>
<accession>B1Y153</accession>